<evidence type="ECO:0000255" key="1">
    <source>
        <dbReference type="HAMAP-Rule" id="MF_00598"/>
    </source>
</evidence>
<dbReference type="EMBL" id="CP001396">
    <property type="protein sequence ID" value="ACR62385.1"/>
    <property type="molecule type" value="Genomic_DNA"/>
</dbReference>
<dbReference type="RefSeq" id="WP_000460680.1">
    <property type="nucleotide sequence ID" value="NC_012759.1"/>
</dbReference>
<dbReference type="SMR" id="C4ZUD9"/>
<dbReference type="GeneID" id="93778703"/>
<dbReference type="KEGG" id="ebw:BWG_2975"/>
<dbReference type="HOGENOM" id="CLU_133242_0_0_6"/>
<dbReference type="HAMAP" id="MF_00598">
    <property type="entry name" value="Smg"/>
    <property type="match status" value="1"/>
</dbReference>
<dbReference type="InterPro" id="IPR007456">
    <property type="entry name" value="Smg"/>
</dbReference>
<dbReference type="NCBIfam" id="NF002897">
    <property type="entry name" value="PRK03430.1"/>
    <property type="match status" value="1"/>
</dbReference>
<dbReference type="PANTHER" id="PTHR38692">
    <property type="entry name" value="PROTEIN SMG"/>
    <property type="match status" value="1"/>
</dbReference>
<dbReference type="PANTHER" id="PTHR38692:SF1">
    <property type="entry name" value="PROTEIN SMG"/>
    <property type="match status" value="1"/>
</dbReference>
<dbReference type="Pfam" id="PF04361">
    <property type="entry name" value="DUF494"/>
    <property type="match status" value="1"/>
</dbReference>
<proteinExistence type="inferred from homology"/>
<accession>C4ZUD9</accession>
<reference key="1">
    <citation type="journal article" date="2009" name="J. Bacteriol.">
        <title>Genomic sequencing reveals regulatory mutations and recombinational events in the widely used MC4100 lineage of Escherichia coli K-12.</title>
        <authorList>
            <person name="Ferenci T."/>
            <person name="Zhou Z."/>
            <person name="Betteridge T."/>
            <person name="Ren Y."/>
            <person name="Liu Y."/>
            <person name="Feng L."/>
            <person name="Reeves P.R."/>
            <person name="Wang L."/>
        </authorList>
    </citation>
    <scope>NUCLEOTIDE SEQUENCE [LARGE SCALE GENOMIC DNA]</scope>
    <source>
        <strain>K12 / MC4100 / BW2952</strain>
    </source>
</reference>
<protein>
    <recommendedName>
        <fullName evidence="1">Protein Smg</fullName>
    </recommendedName>
</protein>
<feature type="chain" id="PRO_1000212183" description="Protein Smg">
    <location>
        <begin position="1"/>
        <end position="157"/>
    </location>
</feature>
<name>SMG_ECOBW</name>
<sequence length="157" mass="18510">MFDVLMYLFETYIHTEAELRVDQDKLEQDLTDAGFEREDIYNALLWLEKLADYQEGLAEPMQLASDPLSMRIYTPEECERLDASCRGFLLFLEQIQVLNLETREMVIERVLALDNAEFELDDLKWVILMVLFNIPGCENAYQQMEELLFEVNEGMLH</sequence>
<organism>
    <name type="scientific">Escherichia coli (strain K12 / MC4100 / BW2952)</name>
    <dbReference type="NCBI Taxonomy" id="595496"/>
    <lineage>
        <taxon>Bacteria</taxon>
        <taxon>Pseudomonadati</taxon>
        <taxon>Pseudomonadota</taxon>
        <taxon>Gammaproteobacteria</taxon>
        <taxon>Enterobacterales</taxon>
        <taxon>Enterobacteriaceae</taxon>
        <taxon>Escherichia</taxon>
    </lineage>
</organism>
<comment type="similarity">
    <text evidence="1">Belongs to the Smg family.</text>
</comment>
<gene>
    <name evidence="1" type="primary">smg</name>
    <name type="ordered locus">BWG_2975</name>
</gene>